<feature type="chain" id="PRO_0000127812" description="Uncharacterized protein AF_0022">
    <location>
        <begin position="1"/>
        <end position="91"/>
    </location>
</feature>
<dbReference type="EMBL" id="AE000782">
    <property type="protein sequence ID" value="AAB91213.1"/>
    <property type="molecule type" value="Genomic_DNA"/>
</dbReference>
<dbReference type="PIR" id="F69252">
    <property type="entry name" value="F69252"/>
</dbReference>
<dbReference type="RefSeq" id="WP_010877536.1">
    <property type="nucleotide sequence ID" value="NC_000917.1"/>
</dbReference>
<dbReference type="SMR" id="O30213"/>
<dbReference type="STRING" id="224325.AF_0022"/>
<dbReference type="PaxDb" id="224325-AF_0022"/>
<dbReference type="EnsemblBacteria" id="AAB91213">
    <property type="protein sequence ID" value="AAB91213"/>
    <property type="gene ID" value="AF_0022"/>
</dbReference>
<dbReference type="GeneID" id="1483232"/>
<dbReference type="KEGG" id="afu:AF_0022"/>
<dbReference type="eggNOG" id="arCOG00536">
    <property type="taxonomic scope" value="Archaea"/>
</dbReference>
<dbReference type="HOGENOM" id="CLU_2419852_0_0_2"/>
<dbReference type="Proteomes" id="UP000002199">
    <property type="component" value="Chromosome"/>
</dbReference>
<dbReference type="CDD" id="cd17040">
    <property type="entry name" value="Ubl_MoaD_like"/>
    <property type="match status" value="1"/>
</dbReference>
<dbReference type="Gene3D" id="3.10.20.30">
    <property type="match status" value="1"/>
</dbReference>
<dbReference type="InterPro" id="IPR012675">
    <property type="entry name" value="Beta-grasp_dom_sf"/>
</dbReference>
<dbReference type="InterPro" id="IPR016155">
    <property type="entry name" value="Mopterin_synth/thiamin_S_b"/>
</dbReference>
<dbReference type="InterPro" id="IPR003749">
    <property type="entry name" value="ThiS/MoaD-like"/>
</dbReference>
<dbReference type="Pfam" id="PF02597">
    <property type="entry name" value="ThiS"/>
    <property type="match status" value="1"/>
</dbReference>
<dbReference type="SUPFAM" id="SSF54285">
    <property type="entry name" value="MoaD/ThiS"/>
    <property type="match status" value="1"/>
</dbReference>
<organism>
    <name type="scientific">Archaeoglobus fulgidus (strain ATCC 49558 / DSM 4304 / JCM 9628 / NBRC 100126 / VC-16)</name>
    <dbReference type="NCBI Taxonomy" id="224325"/>
    <lineage>
        <taxon>Archaea</taxon>
        <taxon>Methanobacteriati</taxon>
        <taxon>Methanobacteriota</taxon>
        <taxon>Archaeoglobi</taxon>
        <taxon>Archaeoglobales</taxon>
        <taxon>Archaeoglobaceae</taxon>
        <taxon>Archaeoglobus</taxon>
    </lineage>
</organism>
<protein>
    <recommendedName>
        <fullName>Uncharacterized protein AF_0022</fullName>
    </recommendedName>
</protein>
<proteinExistence type="predicted"/>
<accession>O30213</accession>
<sequence length="91" mass="10100">MKVKVTLSAVQFRSLVDYESRSFHLDLGEGSTLGDAVRAVEEMLSAEIEPLLERGNVRIMMNNSLVDYQKEKNRVLNDGDALIFITPISGG</sequence>
<name>Y022_ARCFU</name>
<keyword id="KW-1185">Reference proteome</keyword>
<reference key="1">
    <citation type="journal article" date="1997" name="Nature">
        <title>The complete genome sequence of the hyperthermophilic, sulphate-reducing archaeon Archaeoglobus fulgidus.</title>
        <authorList>
            <person name="Klenk H.-P."/>
            <person name="Clayton R.A."/>
            <person name="Tomb J.-F."/>
            <person name="White O."/>
            <person name="Nelson K.E."/>
            <person name="Ketchum K.A."/>
            <person name="Dodson R.J."/>
            <person name="Gwinn M.L."/>
            <person name="Hickey E.K."/>
            <person name="Peterson J.D."/>
            <person name="Richardson D.L."/>
            <person name="Kerlavage A.R."/>
            <person name="Graham D.E."/>
            <person name="Kyrpides N.C."/>
            <person name="Fleischmann R.D."/>
            <person name="Quackenbush J."/>
            <person name="Lee N.H."/>
            <person name="Sutton G.G."/>
            <person name="Gill S.R."/>
            <person name="Kirkness E.F."/>
            <person name="Dougherty B.A."/>
            <person name="McKenney K."/>
            <person name="Adams M.D."/>
            <person name="Loftus B.J."/>
            <person name="Peterson S.N."/>
            <person name="Reich C.I."/>
            <person name="McNeil L.K."/>
            <person name="Badger J.H."/>
            <person name="Glodek A."/>
            <person name="Zhou L."/>
            <person name="Overbeek R."/>
            <person name="Gocayne J.D."/>
            <person name="Weidman J.F."/>
            <person name="McDonald L.A."/>
            <person name="Utterback T.R."/>
            <person name="Cotton M.D."/>
            <person name="Spriggs T."/>
            <person name="Artiach P."/>
            <person name="Kaine B.P."/>
            <person name="Sykes S.M."/>
            <person name="Sadow P.W."/>
            <person name="D'Andrea K.P."/>
            <person name="Bowman C."/>
            <person name="Fujii C."/>
            <person name="Garland S.A."/>
            <person name="Mason T.M."/>
            <person name="Olsen G.J."/>
            <person name="Fraser C.M."/>
            <person name="Smith H.O."/>
            <person name="Woese C.R."/>
            <person name="Venter J.C."/>
        </authorList>
    </citation>
    <scope>NUCLEOTIDE SEQUENCE [LARGE SCALE GENOMIC DNA]</scope>
    <source>
        <strain>ATCC 49558 / DSM 4304 / JCM 9628 / NBRC 100126 / VC-16</strain>
    </source>
</reference>
<gene>
    <name type="ordered locus">AF_0022</name>
</gene>